<evidence type="ECO:0000255" key="1"/>
<evidence type="ECO:0000256" key="2">
    <source>
        <dbReference type="SAM" id="MobiDB-lite"/>
    </source>
</evidence>
<evidence type="ECO:0000269" key="3">
    <source>
    </source>
</evidence>
<evidence type="ECO:0000269" key="4">
    <source>
    </source>
</evidence>
<evidence type="ECO:0000305" key="5"/>
<gene>
    <name type="primary">gnrA</name>
    <name type="ORF">DDB_G0291125</name>
</gene>
<protein>
    <recommendedName>
        <fullName>Gelsolin-related protein of 125 kDa</fullName>
        <shortName>GRP125</shortName>
    </recommendedName>
</protein>
<comment type="function">
    <text evidence="4">Involved in phototaxis. Required for coupling photodetection to the locomotory machinery of slugs. May be essential in the natural environment for the propagation of spores.</text>
</comment>
<comment type="subunit">
    <text evidence="3">Interacts with rasD and abpC.</text>
</comment>
<comment type="subcellular location">
    <subcellularLocation>
        <location evidence="4">Cytoplasmic vesicle</location>
    </subcellularLocation>
</comment>
<comment type="developmental stage">
    <text evidence="4">Expression is tightly regulated. Barely present in vegetative cells and peaks at the transition to the multicellular pseudoplasmodial stage of development.</text>
</comment>
<comment type="disruption phenotype">
    <text evidence="4">Severe defect in the ability of slugs to orient properly towards the light.</text>
</comment>
<comment type="similarity">
    <text evidence="5">Belongs to the villin/gelsolin family.</text>
</comment>
<reference key="1">
    <citation type="journal article" date="1999" name="Mol. Biol. Cell">
        <title>Phototactic migration of Dictyostelium cells is linked to a new type of gelsolin-related protein.</title>
        <authorList>
            <person name="Stocker S."/>
            <person name="Hiery M."/>
            <person name="Marriott G."/>
        </authorList>
    </citation>
    <scope>NUCLEOTIDE SEQUENCE [GENOMIC DNA]</scope>
    <scope>DEVELOPMENTAL STAGE</scope>
    <scope>DISRUPTION PHENOTYPE</scope>
    <scope>FUNCTION</scope>
    <scope>SUBCELLULAR LOCATION</scope>
    <source>
        <strain>AX2</strain>
    </source>
</reference>
<reference key="2">
    <citation type="journal article" date="2005" name="Nature">
        <title>The genome of the social amoeba Dictyostelium discoideum.</title>
        <authorList>
            <person name="Eichinger L."/>
            <person name="Pachebat J.A."/>
            <person name="Gloeckner G."/>
            <person name="Rajandream M.A."/>
            <person name="Sucgang R."/>
            <person name="Berriman M."/>
            <person name="Song J."/>
            <person name="Olsen R."/>
            <person name="Szafranski K."/>
            <person name="Xu Q."/>
            <person name="Tunggal B."/>
            <person name="Kummerfeld S."/>
            <person name="Madera M."/>
            <person name="Konfortov B.A."/>
            <person name="Rivero F."/>
            <person name="Bankier A.T."/>
            <person name="Lehmann R."/>
            <person name="Hamlin N."/>
            <person name="Davies R."/>
            <person name="Gaudet P."/>
            <person name="Fey P."/>
            <person name="Pilcher K."/>
            <person name="Chen G."/>
            <person name="Saunders D."/>
            <person name="Sodergren E.J."/>
            <person name="Davis P."/>
            <person name="Kerhornou A."/>
            <person name="Nie X."/>
            <person name="Hall N."/>
            <person name="Anjard C."/>
            <person name="Hemphill L."/>
            <person name="Bason N."/>
            <person name="Farbrother P."/>
            <person name="Desany B."/>
            <person name="Just E."/>
            <person name="Morio T."/>
            <person name="Rost R."/>
            <person name="Churcher C.M."/>
            <person name="Cooper J."/>
            <person name="Haydock S."/>
            <person name="van Driessche N."/>
            <person name="Cronin A."/>
            <person name="Goodhead I."/>
            <person name="Muzny D.M."/>
            <person name="Mourier T."/>
            <person name="Pain A."/>
            <person name="Lu M."/>
            <person name="Harper D."/>
            <person name="Lindsay R."/>
            <person name="Hauser H."/>
            <person name="James K.D."/>
            <person name="Quiles M."/>
            <person name="Madan Babu M."/>
            <person name="Saito T."/>
            <person name="Buchrieser C."/>
            <person name="Wardroper A."/>
            <person name="Felder M."/>
            <person name="Thangavelu M."/>
            <person name="Johnson D."/>
            <person name="Knights A."/>
            <person name="Loulseged H."/>
            <person name="Mungall K.L."/>
            <person name="Oliver K."/>
            <person name="Price C."/>
            <person name="Quail M.A."/>
            <person name="Urushihara H."/>
            <person name="Hernandez J."/>
            <person name="Rabbinowitsch E."/>
            <person name="Steffen D."/>
            <person name="Sanders M."/>
            <person name="Ma J."/>
            <person name="Kohara Y."/>
            <person name="Sharp S."/>
            <person name="Simmonds M.N."/>
            <person name="Spiegler S."/>
            <person name="Tivey A."/>
            <person name="Sugano S."/>
            <person name="White B."/>
            <person name="Walker D."/>
            <person name="Woodward J.R."/>
            <person name="Winckler T."/>
            <person name="Tanaka Y."/>
            <person name="Shaulsky G."/>
            <person name="Schleicher M."/>
            <person name="Weinstock G.M."/>
            <person name="Rosenthal A."/>
            <person name="Cox E.C."/>
            <person name="Chisholm R.L."/>
            <person name="Gibbs R.A."/>
            <person name="Loomis W.F."/>
            <person name="Platzer M."/>
            <person name="Kay R.R."/>
            <person name="Williams J.G."/>
            <person name="Dear P.H."/>
            <person name="Noegel A.A."/>
            <person name="Barrell B.G."/>
            <person name="Kuspa A."/>
        </authorList>
    </citation>
    <scope>NUCLEOTIDE SEQUENCE [LARGE SCALE GENOMIC DNA]</scope>
    <source>
        <strain>AX4</strain>
    </source>
</reference>
<reference key="3">
    <citation type="journal article" date="2006" name="Eur. J. Cell Biol.">
        <title>A phototaxis signalling complex in Dictyostelium discoideum.</title>
        <authorList>
            <person name="Bandala-Sanchez E."/>
            <person name="Annesley S.J."/>
            <person name="Fisher P.R."/>
        </authorList>
    </citation>
    <scope>INTERACTION WITH RASD AND ABPC</scope>
</reference>
<name>GNRA_DICDI</name>
<sequence>MEEDNIVDSKEIENNVEDKKEETPSSSPSPSSSLQQQQEEGGVVKQAVSNLVSSSITLHDDAKLIQVTGKDEPFHFISVPMSVEFLNLEDVFIMQSDAYIFVWCSEQANIKKKAKAVQMAQKLKVEIGCQRAVQVLEIGEEHPTFLFCLGVPKGTKLNVTKEKNDIFQVDEDDEEQVLEPEFFLFKIFTGTDGKPSIKPMEEDEGINQEMLESSACFILDCEHEMYIWLGKGVKKSTKDTLIPVAKKIWTQYDRPEYYGKLKLQPIITWVFDGAESCLFKSKFSKWVEKAQPLQTSYLSLSSKKKEALNFDVSSMHQDKEVPVINIGAASDYSNGKLLVWCSGGGSGNKWNKVEEDDFGIFYSNKSYVCHFIYKPENKNSIRSVIFFWEGLYSNQRNYIGYKFGLYKEIQKKMEGLKSDDPVEYRISQNKEPQEFINLFGTELLVLNEELALKPMIFQVRANRGTQLFPDPDSCNAKLLNSLDSFVFLFPNKYIIVWHGKVSTEHQRELAADLFTFLPPEYEAGVKEFDQGKESDNFWKIIGGNSNDIVINTFINENKEEKEKEEEEKEEEEEEEEEEEEEEEEEKDNNKTTTIIKHLRPKKIKLFLCTDNSGIFKADQINPFSQVDLNSQECVLLDVYHKVFLWKGSKSTDQKLNDTQDLAKQYIETANDQRPSDCSVELVEQYNESPLFKSYFHSWKVTPPKVFIDPIISYKQKLAERLQKEKEDLEKLKQQQEQEQEQQQKENNKIVEEVKEEVKEEDVKEEVKEEEVKEEEVKEEEVKEVAKEETKEEIKEEVNDEATEVKEVNQVEEEVKEEEVKEEVKVEVKEEEVKGEAKEEEVKEEEVKEEEVKEEVKEVKEEVKEEVKQDKEEEVNEEIKEETKEEETKEDDNKEDEKVNEENETVNEENEVGIIVSPPSEKVDEANSSSTISSPENEGSVSVKDKRKSNEPITPSVVSSSGDLLFAYEPYHGPPIHSSNSPKQGRKGGRKSHGKNQPQHKKNHSVDQSPLSSPIIPNKSLNLDIDNQSFDLNSINNNNSVEVLDGASSPLSFSSSSINSNSTHNTPSKKNKNKNKKKHNRSSSLTHA</sequence>
<organism>
    <name type="scientific">Dictyostelium discoideum</name>
    <name type="common">Social amoeba</name>
    <dbReference type="NCBI Taxonomy" id="44689"/>
    <lineage>
        <taxon>Eukaryota</taxon>
        <taxon>Amoebozoa</taxon>
        <taxon>Evosea</taxon>
        <taxon>Eumycetozoa</taxon>
        <taxon>Dictyostelia</taxon>
        <taxon>Dictyosteliales</taxon>
        <taxon>Dictyosteliaceae</taxon>
        <taxon>Dictyostelium</taxon>
    </lineage>
</organism>
<proteinExistence type="evidence at protein level"/>
<feature type="chain" id="PRO_0000384375" description="Gelsolin-related protein of 125 kDa">
    <location>
        <begin position="1"/>
        <end position="1087"/>
    </location>
</feature>
<feature type="repeat" description="Gelsolin-like 1">
    <location>
        <begin position="73"/>
        <end position="146"/>
    </location>
</feature>
<feature type="repeat" description="Gelsolin-like 2">
    <location>
        <begin position="183"/>
        <end position="286"/>
    </location>
</feature>
<feature type="repeat" description="Gelsolin-like 3">
    <location>
        <begin position="335"/>
        <end position="442"/>
    </location>
</feature>
<feature type="repeat" description="Gelsolin-like 4">
    <location>
        <begin position="465"/>
        <end position="538"/>
    </location>
</feature>
<feature type="repeat" description="Gelsolin-like 5">
    <location>
        <begin position="614"/>
        <end position="692"/>
    </location>
</feature>
<feature type="region of interest" description="Disordered" evidence="2">
    <location>
        <begin position="1"/>
        <end position="40"/>
    </location>
</feature>
<feature type="region of interest" description="Disordered" evidence="2">
    <location>
        <begin position="555"/>
        <end position="592"/>
    </location>
</feature>
<feature type="region of interest" description="Disordered" evidence="2">
    <location>
        <begin position="732"/>
        <end position="1087"/>
    </location>
</feature>
<feature type="coiled-coil region" evidence="1">
    <location>
        <begin position="550"/>
        <end position="598"/>
    </location>
</feature>
<feature type="coiled-coil region" evidence="1">
    <location>
        <begin position="710"/>
        <end position="912"/>
    </location>
</feature>
<feature type="compositionally biased region" description="Basic and acidic residues" evidence="2">
    <location>
        <begin position="7"/>
        <end position="23"/>
    </location>
</feature>
<feature type="compositionally biased region" description="Low complexity" evidence="2">
    <location>
        <begin position="24"/>
        <end position="40"/>
    </location>
</feature>
<feature type="compositionally biased region" description="Acidic residues" evidence="2">
    <location>
        <begin position="562"/>
        <end position="586"/>
    </location>
</feature>
<feature type="compositionally biased region" description="Basic and acidic residues" evidence="2">
    <location>
        <begin position="732"/>
        <end position="770"/>
    </location>
</feature>
<feature type="compositionally biased region" description="Basic and acidic residues" evidence="2">
    <location>
        <begin position="779"/>
        <end position="808"/>
    </location>
</feature>
<feature type="compositionally biased region" description="Basic and acidic residues" evidence="2">
    <location>
        <begin position="817"/>
        <end position="840"/>
    </location>
</feature>
<feature type="compositionally biased region" description="Basic and acidic residues" evidence="2">
    <location>
        <begin position="849"/>
        <end position="900"/>
    </location>
</feature>
<feature type="compositionally biased region" description="Acidic residues" evidence="2">
    <location>
        <begin position="901"/>
        <end position="910"/>
    </location>
</feature>
<feature type="compositionally biased region" description="Polar residues" evidence="2">
    <location>
        <begin position="925"/>
        <end position="939"/>
    </location>
</feature>
<feature type="compositionally biased region" description="Polar residues" evidence="2">
    <location>
        <begin position="950"/>
        <end position="961"/>
    </location>
</feature>
<feature type="compositionally biased region" description="Basic residues" evidence="2">
    <location>
        <begin position="983"/>
        <end position="1002"/>
    </location>
</feature>
<feature type="compositionally biased region" description="Polar residues" evidence="2">
    <location>
        <begin position="1018"/>
        <end position="1040"/>
    </location>
</feature>
<feature type="compositionally biased region" description="Low complexity" evidence="2">
    <location>
        <begin position="1047"/>
        <end position="1065"/>
    </location>
</feature>
<feature type="compositionally biased region" description="Basic residues" evidence="2">
    <location>
        <begin position="1066"/>
        <end position="1080"/>
    </location>
</feature>
<accession>O96923</accession>
<accession>Q54F43</accession>
<dbReference type="EMBL" id="U95159">
    <property type="protein sequence ID" value="AAD00774.1"/>
    <property type="molecule type" value="Genomic_DNA"/>
</dbReference>
<dbReference type="EMBL" id="AAFI02000175">
    <property type="protein sequence ID" value="EAL61846.1"/>
    <property type="molecule type" value="Genomic_DNA"/>
</dbReference>
<dbReference type="PIR" id="T30330">
    <property type="entry name" value="T30330"/>
</dbReference>
<dbReference type="RefSeq" id="XP_635347.1">
    <property type="nucleotide sequence ID" value="XM_630255.1"/>
</dbReference>
<dbReference type="SMR" id="O96923"/>
<dbReference type="FunCoup" id="O96923">
    <property type="interactions" value="592"/>
</dbReference>
<dbReference type="STRING" id="44689.O96923"/>
<dbReference type="GlyGen" id="O96923">
    <property type="glycosylation" value="1 site"/>
</dbReference>
<dbReference type="PaxDb" id="44689-DDB0191398"/>
<dbReference type="EnsemblProtists" id="EAL61846">
    <property type="protein sequence ID" value="EAL61846"/>
    <property type="gene ID" value="DDB_G0291125"/>
</dbReference>
<dbReference type="GeneID" id="8627995"/>
<dbReference type="KEGG" id="ddi:DDB_G0291125"/>
<dbReference type="dictyBase" id="DDB_G0291125">
    <property type="gene designation" value="gnrA"/>
</dbReference>
<dbReference type="VEuPathDB" id="AmoebaDB:DDB_G0291125"/>
<dbReference type="eggNOG" id="KOG0443">
    <property type="taxonomic scope" value="Eukaryota"/>
</dbReference>
<dbReference type="HOGENOM" id="CLU_285204_0_0_1"/>
<dbReference type="InParanoid" id="O96923"/>
<dbReference type="OMA" id="FILDCEH"/>
<dbReference type="PhylomeDB" id="O96923"/>
<dbReference type="Reactome" id="R-DDI-6798695">
    <property type="pathway name" value="Neutrophil degranulation"/>
</dbReference>
<dbReference type="PRO" id="PR:O96923"/>
<dbReference type="Proteomes" id="UP000002195">
    <property type="component" value="Chromosome 5"/>
</dbReference>
<dbReference type="GO" id="GO:0015629">
    <property type="term" value="C:actin cytoskeleton"/>
    <property type="evidence" value="ECO:0000318"/>
    <property type="project" value="GO_Central"/>
</dbReference>
<dbReference type="GO" id="GO:0005737">
    <property type="term" value="C:cytoplasm"/>
    <property type="evidence" value="ECO:0000318"/>
    <property type="project" value="GO_Central"/>
</dbReference>
<dbReference type="GO" id="GO:0031410">
    <property type="term" value="C:cytoplasmic vesicle"/>
    <property type="evidence" value="ECO:0000314"/>
    <property type="project" value="dictyBase"/>
</dbReference>
<dbReference type="GO" id="GO:0045121">
    <property type="term" value="C:membrane raft"/>
    <property type="evidence" value="ECO:0000314"/>
    <property type="project" value="dictyBase"/>
</dbReference>
<dbReference type="GO" id="GO:0051015">
    <property type="term" value="F:actin filament binding"/>
    <property type="evidence" value="ECO:0000318"/>
    <property type="project" value="GO_Central"/>
</dbReference>
<dbReference type="GO" id="GO:0031005">
    <property type="term" value="F:filamin binding"/>
    <property type="evidence" value="ECO:0000353"/>
    <property type="project" value="dictyBase"/>
</dbReference>
<dbReference type="GO" id="GO:0005546">
    <property type="term" value="F:phosphatidylinositol-4,5-bisphosphate binding"/>
    <property type="evidence" value="ECO:0000318"/>
    <property type="project" value="GO_Central"/>
</dbReference>
<dbReference type="GO" id="GO:0031267">
    <property type="term" value="F:small GTPase binding"/>
    <property type="evidence" value="ECO:0000353"/>
    <property type="project" value="dictyBase"/>
</dbReference>
<dbReference type="GO" id="GO:0051014">
    <property type="term" value="P:actin filament severing"/>
    <property type="evidence" value="ECO:0000318"/>
    <property type="project" value="GO_Central"/>
</dbReference>
<dbReference type="GO" id="GO:0008154">
    <property type="term" value="P:actin polymerization or depolymerization"/>
    <property type="evidence" value="ECO:0000318"/>
    <property type="project" value="GO_Central"/>
</dbReference>
<dbReference type="GO" id="GO:0051016">
    <property type="term" value="P:barbed-end actin filament capping"/>
    <property type="evidence" value="ECO:0000318"/>
    <property type="project" value="GO_Central"/>
</dbReference>
<dbReference type="GO" id="GO:0042331">
    <property type="term" value="P:phototaxis"/>
    <property type="evidence" value="ECO:0000315"/>
    <property type="project" value="dictyBase"/>
</dbReference>
<dbReference type="GO" id="GO:0031153">
    <property type="term" value="P:slug development involved in sorocarp development"/>
    <property type="evidence" value="ECO:0000314"/>
    <property type="project" value="dictyBase"/>
</dbReference>
<dbReference type="CDD" id="cd11289">
    <property type="entry name" value="gelsolin_S2_like"/>
    <property type="match status" value="1"/>
</dbReference>
<dbReference type="CDD" id="cd11292">
    <property type="entry name" value="gelsolin_S3_like"/>
    <property type="match status" value="1"/>
</dbReference>
<dbReference type="CDD" id="cd11288">
    <property type="entry name" value="gelsolin_S5_like"/>
    <property type="match status" value="1"/>
</dbReference>
<dbReference type="CDD" id="cd11291">
    <property type="entry name" value="gelsolin_S6_like"/>
    <property type="match status" value="1"/>
</dbReference>
<dbReference type="FunFam" id="3.40.20.10:FF:000120">
    <property type="entry name" value="Gelsolin-related protein of 125 kDa"/>
    <property type="match status" value="1"/>
</dbReference>
<dbReference type="Gene3D" id="3.40.20.10">
    <property type="entry name" value="Severin"/>
    <property type="match status" value="5"/>
</dbReference>
<dbReference type="InterPro" id="IPR029006">
    <property type="entry name" value="ADF-H/Gelsolin-like_dom_sf"/>
</dbReference>
<dbReference type="InterPro" id="IPR007123">
    <property type="entry name" value="Gelsolin-like_dom"/>
</dbReference>
<dbReference type="InterPro" id="IPR007122">
    <property type="entry name" value="Villin/Gelsolin"/>
</dbReference>
<dbReference type="PANTHER" id="PTHR11977:SF129">
    <property type="entry name" value="GELSOLIN-RELATED PROTEIN OF 125 KDA"/>
    <property type="match status" value="1"/>
</dbReference>
<dbReference type="PANTHER" id="PTHR11977">
    <property type="entry name" value="VILLIN"/>
    <property type="match status" value="1"/>
</dbReference>
<dbReference type="Pfam" id="PF00626">
    <property type="entry name" value="Gelsolin"/>
    <property type="match status" value="3"/>
</dbReference>
<dbReference type="PRINTS" id="PR00597">
    <property type="entry name" value="GELSOLIN"/>
</dbReference>
<dbReference type="SMART" id="SM00262">
    <property type="entry name" value="GEL"/>
    <property type="match status" value="5"/>
</dbReference>
<dbReference type="SUPFAM" id="SSF55753">
    <property type="entry name" value="Actin depolymerizing proteins"/>
    <property type="match status" value="5"/>
</dbReference>
<keyword id="KW-0175">Coiled coil</keyword>
<keyword id="KW-0968">Cytoplasmic vesicle</keyword>
<keyword id="KW-1185">Reference proteome</keyword>
<keyword id="KW-0677">Repeat</keyword>